<accession>P22741</accession>
<sequence length="141" mass="15273">VLSAADKNNVKGIFGKISSHAEDYGAEALERMFITYPSTKTYFPHFDLSHGSAQVKGHGKKVVAALIEAANHIDDIAGTLSKLSDLHAHKLRVDPVNFKLLGQCFLVVVAIHHPSALTPEVHASLDKFLCAVGNVLTAKYR</sequence>
<protein>
    <recommendedName>
        <fullName>Hemoglobin subunit alpha-A</fullName>
    </recommendedName>
    <alternativeName>
        <fullName>Alpha-A-globin</fullName>
    </alternativeName>
    <alternativeName>
        <fullName>Hemoglobin alpha-A chain</fullName>
    </alternativeName>
</protein>
<reference key="1">
    <citation type="journal article" date="1989" name="J. Protein Chem.">
        <title>Primary structure of hemoglobin from gray partridge (Francolinus pondacerianus, Galliformes).</title>
        <authorList>
            <person name="Abbasi A."/>
            <person name="Zaidi Z.H."/>
        </authorList>
    </citation>
    <scope>PROTEIN SEQUENCE</scope>
</reference>
<reference key="2">
    <citation type="submission" date="1991-03" db="PIR data bank">
        <authorList>
            <person name="Abbasi A."/>
            <person name="Zaidi Z.H."/>
        </authorList>
    </citation>
    <scope>SEQUENCE REVISION</scope>
</reference>
<dbReference type="PIR" id="JU0338">
    <property type="entry name" value="HAQJAF"/>
</dbReference>
<dbReference type="SMR" id="P22741"/>
<dbReference type="GO" id="GO:0072562">
    <property type="term" value="C:blood microparticle"/>
    <property type="evidence" value="ECO:0007669"/>
    <property type="project" value="TreeGrafter"/>
</dbReference>
<dbReference type="GO" id="GO:0031838">
    <property type="term" value="C:haptoglobin-hemoglobin complex"/>
    <property type="evidence" value="ECO:0007669"/>
    <property type="project" value="TreeGrafter"/>
</dbReference>
<dbReference type="GO" id="GO:0005833">
    <property type="term" value="C:hemoglobin complex"/>
    <property type="evidence" value="ECO:0007669"/>
    <property type="project" value="InterPro"/>
</dbReference>
<dbReference type="GO" id="GO:0031720">
    <property type="term" value="F:haptoglobin binding"/>
    <property type="evidence" value="ECO:0007669"/>
    <property type="project" value="TreeGrafter"/>
</dbReference>
<dbReference type="GO" id="GO:0020037">
    <property type="term" value="F:heme binding"/>
    <property type="evidence" value="ECO:0007669"/>
    <property type="project" value="InterPro"/>
</dbReference>
<dbReference type="GO" id="GO:0005506">
    <property type="term" value="F:iron ion binding"/>
    <property type="evidence" value="ECO:0007669"/>
    <property type="project" value="InterPro"/>
</dbReference>
<dbReference type="GO" id="GO:0043177">
    <property type="term" value="F:organic acid binding"/>
    <property type="evidence" value="ECO:0007669"/>
    <property type="project" value="TreeGrafter"/>
</dbReference>
<dbReference type="GO" id="GO:0019825">
    <property type="term" value="F:oxygen binding"/>
    <property type="evidence" value="ECO:0007669"/>
    <property type="project" value="InterPro"/>
</dbReference>
<dbReference type="GO" id="GO:0005344">
    <property type="term" value="F:oxygen carrier activity"/>
    <property type="evidence" value="ECO:0007669"/>
    <property type="project" value="UniProtKB-KW"/>
</dbReference>
<dbReference type="GO" id="GO:0004601">
    <property type="term" value="F:peroxidase activity"/>
    <property type="evidence" value="ECO:0007669"/>
    <property type="project" value="TreeGrafter"/>
</dbReference>
<dbReference type="GO" id="GO:0042744">
    <property type="term" value="P:hydrogen peroxide catabolic process"/>
    <property type="evidence" value="ECO:0007669"/>
    <property type="project" value="TreeGrafter"/>
</dbReference>
<dbReference type="CDD" id="cd08927">
    <property type="entry name" value="Hb-alpha-like"/>
    <property type="match status" value="1"/>
</dbReference>
<dbReference type="FunFam" id="1.10.490.10:FF:000002">
    <property type="entry name" value="Hemoglobin subunit alpha"/>
    <property type="match status" value="1"/>
</dbReference>
<dbReference type="Gene3D" id="1.10.490.10">
    <property type="entry name" value="Globins"/>
    <property type="match status" value="1"/>
</dbReference>
<dbReference type="InterPro" id="IPR000971">
    <property type="entry name" value="Globin"/>
</dbReference>
<dbReference type="InterPro" id="IPR009050">
    <property type="entry name" value="Globin-like_sf"/>
</dbReference>
<dbReference type="InterPro" id="IPR012292">
    <property type="entry name" value="Globin/Proto"/>
</dbReference>
<dbReference type="InterPro" id="IPR002338">
    <property type="entry name" value="Hemoglobin_a-typ"/>
</dbReference>
<dbReference type="InterPro" id="IPR050056">
    <property type="entry name" value="Hemoglobin_oxygen_transport"/>
</dbReference>
<dbReference type="InterPro" id="IPR002339">
    <property type="entry name" value="Hemoglobin_pi"/>
</dbReference>
<dbReference type="PANTHER" id="PTHR11442">
    <property type="entry name" value="HEMOGLOBIN FAMILY MEMBER"/>
    <property type="match status" value="1"/>
</dbReference>
<dbReference type="PANTHER" id="PTHR11442:SF48">
    <property type="entry name" value="HEMOGLOBIN SUBUNIT ALPHA"/>
    <property type="match status" value="1"/>
</dbReference>
<dbReference type="Pfam" id="PF00042">
    <property type="entry name" value="Globin"/>
    <property type="match status" value="1"/>
</dbReference>
<dbReference type="PRINTS" id="PR00612">
    <property type="entry name" value="ALPHAHAEM"/>
</dbReference>
<dbReference type="PRINTS" id="PR00815">
    <property type="entry name" value="PIHAEM"/>
</dbReference>
<dbReference type="SUPFAM" id="SSF46458">
    <property type="entry name" value="Globin-like"/>
    <property type="match status" value="1"/>
</dbReference>
<dbReference type="PROSITE" id="PS01033">
    <property type="entry name" value="GLOBIN"/>
    <property type="match status" value="1"/>
</dbReference>
<evidence type="ECO:0000255" key="1">
    <source>
        <dbReference type="PROSITE-ProRule" id="PRU00238"/>
    </source>
</evidence>
<comment type="function">
    <text>Involved in oxygen transport from the lung to the various peripheral tissues.</text>
</comment>
<comment type="subunit">
    <text>Heterotetramer of two alpha chains and two beta chains.</text>
</comment>
<comment type="tissue specificity">
    <text>Red blood cells.</text>
</comment>
<comment type="similarity">
    <text evidence="1">Belongs to the globin family.</text>
</comment>
<feature type="chain" id="PRO_0000052636" description="Hemoglobin subunit alpha-A">
    <location>
        <begin position="1"/>
        <end position="141"/>
    </location>
</feature>
<feature type="domain" description="Globin" evidence="1">
    <location>
        <begin position="1"/>
        <end position="141"/>
    </location>
</feature>
<feature type="binding site" evidence="1">
    <location>
        <position position="58"/>
    </location>
    <ligand>
        <name>O2</name>
        <dbReference type="ChEBI" id="CHEBI:15379"/>
    </ligand>
</feature>
<feature type="binding site" description="proximal binding residue" evidence="1">
    <location>
        <position position="87"/>
    </location>
    <ligand>
        <name>heme b</name>
        <dbReference type="ChEBI" id="CHEBI:60344"/>
    </ligand>
    <ligandPart>
        <name>Fe</name>
        <dbReference type="ChEBI" id="CHEBI:18248"/>
    </ligandPart>
</feature>
<proteinExistence type="evidence at protein level"/>
<gene>
    <name type="primary">HBAA</name>
</gene>
<organism>
    <name type="scientific">Francolinus pondicerianus</name>
    <name type="common">Grey francolin</name>
    <name type="synonym">Tetrao pondicerianus</name>
    <dbReference type="NCBI Taxonomy" id="9019"/>
    <lineage>
        <taxon>Eukaryota</taxon>
        <taxon>Metazoa</taxon>
        <taxon>Chordata</taxon>
        <taxon>Craniata</taxon>
        <taxon>Vertebrata</taxon>
        <taxon>Euteleostomi</taxon>
        <taxon>Archelosauria</taxon>
        <taxon>Archosauria</taxon>
        <taxon>Dinosauria</taxon>
        <taxon>Saurischia</taxon>
        <taxon>Theropoda</taxon>
        <taxon>Coelurosauria</taxon>
        <taxon>Aves</taxon>
        <taxon>Neognathae</taxon>
        <taxon>Galloanserae</taxon>
        <taxon>Galliformes</taxon>
        <taxon>Phasianidae</taxon>
        <taxon>Perdicinae</taxon>
        <taxon>Francolinus</taxon>
    </lineage>
</organism>
<keyword id="KW-0903">Direct protein sequencing</keyword>
<keyword id="KW-0349">Heme</keyword>
<keyword id="KW-0408">Iron</keyword>
<keyword id="KW-0479">Metal-binding</keyword>
<keyword id="KW-0561">Oxygen transport</keyword>
<keyword id="KW-0813">Transport</keyword>
<name>HBA_FRAPO</name>